<organism>
    <name type="scientific">Shigella flexneri</name>
    <dbReference type="NCBI Taxonomy" id="623"/>
    <lineage>
        <taxon>Bacteria</taxon>
        <taxon>Pseudomonadati</taxon>
        <taxon>Pseudomonadota</taxon>
        <taxon>Gammaproteobacteria</taxon>
        <taxon>Enterobacterales</taxon>
        <taxon>Enterobacteriaceae</taxon>
        <taxon>Shigella</taxon>
    </lineage>
</organism>
<evidence type="ECO:0000255" key="1">
    <source>
        <dbReference type="HAMAP-Rule" id="MF_01855"/>
    </source>
</evidence>
<proteinExistence type="inferred from homology"/>
<dbReference type="EC" id="3.1.3.11" evidence="1"/>
<dbReference type="EMBL" id="AE005674">
    <property type="protein sequence ID" value="AAN45676.2"/>
    <property type="molecule type" value="Genomic_DNA"/>
</dbReference>
<dbReference type="EMBL" id="AE014073">
    <property type="protein sequence ID" value="AAP19463.1"/>
    <property type="molecule type" value="Genomic_DNA"/>
</dbReference>
<dbReference type="RefSeq" id="NP_709969.2">
    <property type="nucleotide sequence ID" value="NC_004337.2"/>
</dbReference>
<dbReference type="RefSeq" id="WP_000853753.1">
    <property type="nucleotide sequence ID" value="NZ_WPGW01000068.1"/>
</dbReference>
<dbReference type="SMR" id="P0A995"/>
<dbReference type="STRING" id="198214.SF4258"/>
<dbReference type="PaxDb" id="198214-SF4258"/>
<dbReference type="GeneID" id="1025839"/>
<dbReference type="GeneID" id="86861371"/>
<dbReference type="KEGG" id="sfl:SF4258"/>
<dbReference type="KEGG" id="sfx:S4520"/>
<dbReference type="PATRIC" id="fig|198214.7.peg.5022"/>
<dbReference type="HOGENOM" id="CLU_039977_2_2_6"/>
<dbReference type="UniPathway" id="UPA00138"/>
<dbReference type="Proteomes" id="UP000001006">
    <property type="component" value="Chromosome"/>
</dbReference>
<dbReference type="Proteomes" id="UP000002673">
    <property type="component" value="Chromosome"/>
</dbReference>
<dbReference type="GO" id="GO:0005829">
    <property type="term" value="C:cytosol"/>
    <property type="evidence" value="ECO:0007669"/>
    <property type="project" value="TreeGrafter"/>
</dbReference>
<dbReference type="GO" id="GO:0042132">
    <property type="term" value="F:fructose 1,6-bisphosphate 1-phosphatase activity"/>
    <property type="evidence" value="ECO:0007669"/>
    <property type="project" value="UniProtKB-UniRule"/>
</dbReference>
<dbReference type="GO" id="GO:0000287">
    <property type="term" value="F:magnesium ion binding"/>
    <property type="evidence" value="ECO:0007669"/>
    <property type="project" value="UniProtKB-UniRule"/>
</dbReference>
<dbReference type="GO" id="GO:0030388">
    <property type="term" value="P:fructose 1,6-bisphosphate metabolic process"/>
    <property type="evidence" value="ECO:0007669"/>
    <property type="project" value="TreeGrafter"/>
</dbReference>
<dbReference type="GO" id="GO:0006002">
    <property type="term" value="P:fructose 6-phosphate metabolic process"/>
    <property type="evidence" value="ECO:0007669"/>
    <property type="project" value="TreeGrafter"/>
</dbReference>
<dbReference type="GO" id="GO:0006000">
    <property type="term" value="P:fructose metabolic process"/>
    <property type="evidence" value="ECO:0007669"/>
    <property type="project" value="TreeGrafter"/>
</dbReference>
<dbReference type="GO" id="GO:0006094">
    <property type="term" value="P:gluconeogenesis"/>
    <property type="evidence" value="ECO:0007669"/>
    <property type="project" value="UniProtKB-UniRule"/>
</dbReference>
<dbReference type="GO" id="GO:0005986">
    <property type="term" value="P:sucrose biosynthetic process"/>
    <property type="evidence" value="ECO:0007669"/>
    <property type="project" value="TreeGrafter"/>
</dbReference>
<dbReference type="CDD" id="cd00354">
    <property type="entry name" value="FBPase"/>
    <property type="match status" value="1"/>
</dbReference>
<dbReference type="FunFam" id="3.30.540.10:FF:000002">
    <property type="entry name" value="Fructose-1,6-bisphosphatase class 1"/>
    <property type="match status" value="1"/>
</dbReference>
<dbReference type="FunFam" id="3.40.190.80:FF:000001">
    <property type="entry name" value="Fructose-1,6-bisphosphatase class 1"/>
    <property type="match status" value="1"/>
</dbReference>
<dbReference type="Gene3D" id="3.40.190.80">
    <property type="match status" value="1"/>
</dbReference>
<dbReference type="Gene3D" id="3.30.540.10">
    <property type="entry name" value="Fructose-1,6-Bisphosphatase, subunit A, domain 1"/>
    <property type="match status" value="1"/>
</dbReference>
<dbReference type="HAMAP" id="MF_01855">
    <property type="entry name" value="FBPase_class1"/>
    <property type="match status" value="1"/>
</dbReference>
<dbReference type="InterPro" id="IPR044015">
    <property type="entry name" value="FBPase_C_dom"/>
</dbReference>
<dbReference type="InterPro" id="IPR000146">
    <property type="entry name" value="FBPase_class-1"/>
</dbReference>
<dbReference type="InterPro" id="IPR033391">
    <property type="entry name" value="FBPase_N"/>
</dbReference>
<dbReference type="InterPro" id="IPR028343">
    <property type="entry name" value="FBPtase"/>
</dbReference>
<dbReference type="InterPro" id="IPR020548">
    <property type="entry name" value="Fructose_bisphosphatase_AS"/>
</dbReference>
<dbReference type="NCBIfam" id="NF006778">
    <property type="entry name" value="PRK09293.1-1"/>
    <property type="match status" value="1"/>
</dbReference>
<dbReference type="NCBIfam" id="NF006779">
    <property type="entry name" value="PRK09293.1-3"/>
    <property type="match status" value="1"/>
</dbReference>
<dbReference type="PANTHER" id="PTHR11556">
    <property type="entry name" value="FRUCTOSE-1,6-BISPHOSPHATASE-RELATED"/>
    <property type="match status" value="1"/>
</dbReference>
<dbReference type="PANTHER" id="PTHR11556:SF35">
    <property type="entry name" value="SEDOHEPTULOSE-1,7-BISPHOSPHATASE, CHLOROPLASTIC"/>
    <property type="match status" value="1"/>
</dbReference>
<dbReference type="Pfam" id="PF00316">
    <property type="entry name" value="FBPase"/>
    <property type="match status" value="1"/>
</dbReference>
<dbReference type="Pfam" id="PF18913">
    <property type="entry name" value="FBPase_C"/>
    <property type="match status" value="1"/>
</dbReference>
<dbReference type="PIRSF" id="PIRSF500210">
    <property type="entry name" value="FBPtase"/>
    <property type="match status" value="1"/>
</dbReference>
<dbReference type="PIRSF" id="PIRSF000904">
    <property type="entry name" value="FBPtase_SBPase"/>
    <property type="match status" value="1"/>
</dbReference>
<dbReference type="PRINTS" id="PR00115">
    <property type="entry name" value="F16BPHPHTASE"/>
</dbReference>
<dbReference type="SUPFAM" id="SSF56655">
    <property type="entry name" value="Carbohydrate phosphatase"/>
    <property type="match status" value="1"/>
</dbReference>
<dbReference type="PROSITE" id="PS00124">
    <property type="entry name" value="FBPASE"/>
    <property type="match status" value="1"/>
</dbReference>
<comment type="catalytic activity">
    <reaction evidence="1">
        <text>beta-D-fructose 1,6-bisphosphate + H2O = beta-D-fructose 6-phosphate + phosphate</text>
        <dbReference type="Rhea" id="RHEA:11064"/>
        <dbReference type="ChEBI" id="CHEBI:15377"/>
        <dbReference type="ChEBI" id="CHEBI:32966"/>
        <dbReference type="ChEBI" id="CHEBI:43474"/>
        <dbReference type="ChEBI" id="CHEBI:57634"/>
        <dbReference type="EC" id="3.1.3.11"/>
    </reaction>
</comment>
<comment type="cofactor">
    <cofactor evidence="1">
        <name>Mg(2+)</name>
        <dbReference type="ChEBI" id="CHEBI:18420"/>
    </cofactor>
    <text evidence="1">Binds 2 magnesium ions per subunit.</text>
</comment>
<comment type="pathway">
    <text evidence="1">Carbohydrate biosynthesis; gluconeogenesis.</text>
</comment>
<comment type="subunit">
    <text evidence="1">Homotetramer.</text>
</comment>
<comment type="subcellular location">
    <subcellularLocation>
        <location evidence="1">Cytoplasm</location>
    </subcellularLocation>
</comment>
<comment type="similarity">
    <text evidence="1">Belongs to the FBPase class 1 family.</text>
</comment>
<gene>
    <name evidence="1" type="primary">fbp</name>
    <name type="ordered locus">SF4258</name>
    <name type="ordered locus">S4520</name>
</gene>
<sequence>MKTLGEFIVEKQHEFSHATGELTALLSAIKLGAKIIHRDINKAGLVDILGASGAENVQGEVQQKLDLFANEKLKAALKARDIVAGIASEEEDEIVVFEGCEHAKYVVLMDPLDGSSNIDVNVSVGTIFSIYRRVTPVGTPVTEEDFLQPGNKQVAAGYVVYGSSTMLVYTTGCGVHAFTYDPSLGVFCLCQERMRFPEKGKTYSINEGNYIKFPNGVKKYIKFCQEEDKSTNRPYTSRYIGSLVADFHRNLLKGGIYLYPSTASHPDGKLRLLYECNPMAFLAEQAGGKASDGKERILDIIPETLHQRRSFFVGNDHMVEDVERFIREFPDA</sequence>
<reference key="1">
    <citation type="journal article" date="2002" name="Nucleic Acids Res.">
        <title>Genome sequence of Shigella flexneri 2a: insights into pathogenicity through comparison with genomes of Escherichia coli K12 and O157.</title>
        <authorList>
            <person name="Jin Q."/>
            <person name="Yuan Z."/>
            <person name="Xu J."/>
            <person name="Wang Y."/>
            <person name="Shen Y."/>
            <person name="Lu W."/>
            <person name="Wang J."/>
            <person name="Liu H."/>
            <person name="Yang J."/>
            <person name="Yang F."/>
            <person name="Zhang X."/>
            <person name="Zhang J."/>
            <person name="Yang G."/>
            <person name="Wu H."/>
            <person name="Qu D."/>
            <person name="Dong J."/>
            <person name="Sun L."/>
            <person name="Xue Y."/>
            <person name="Zhao A."/>
            <person name="Gao Y."/>
            <person name="Zhu J."/>
            <person name="Kan B."/>
            <person name="Ding K."/>
            <person name="Chen S."/>
            <person name="Cheng H."/>
            <person name="Yao Z."/>
            <person name="He B."/>
            <person name="Chen R."/>
            <person name="Ma D."/>
            <person name="Qiang B."/>
            <person name="Wen Y."/>
            <person name="Hou Y."/>
            <person name="Yu J."/>
        </authorList>
    </citation>
    <scope>NUCLEOTIDE SEQUENCE [LARGE SCALE GENOMIC DNA]</scope>
    <source>
        <strain>301 / Serotype 2a</strain>
    </source>
</reference>
<reference key="2">
    <citation type="journal article" date="2003" name="Infect. Immun.">
        <title>Complete genome sequence and comparative genomics of Shigella flexneri serotype 2a strain 2457T.</title>
        <authorList>
            <person name="Wei J."/>
            <person name="Goldberg M.B."/>
            <person name="Burland V."/>
            <person name="Venkatesan M.M."/>
            <person name="Deng W."/>
            <person name="Fournier G."/>
            <person name="Mayhew G.F."/>
            <person name="Plunkett G. III"/>
            <person name="Rose D.J."/>
            <person name="Darling A."/>
            <person name="Mau B."/>
            <person name="Perna N.T."/>
            <person name="Payne S.M."/>
            <person name="Runyen-Janecky L.J."/>
            <person name="Zhou S."/>
            <person name="Schwartz D.C."/>
            <person name="Blattner F.R."/>
        </authorList>
    </citation>
    <scope>NUCLEOTIDE SEQUENCE [LARGE SCALE GENOMIC DNA]</scope>
    <source>
        <strain>ATCC 700930 / 2457T / Serotype 2a</strain>
    </source>
</reference>
<accession>P0A995</accession>
<accession>P09200</accession>
<feature type="chain" id="PRO_0000200497" description="Fructose-1,6-bisphosphatase class 1">
    <location>
        <begin position="1"/>
        <end position="332"/>
    </location>
</feature>
<feature type="binding site" evidence="1">
    <location>
        <position position="89"/>
    </location>
    <ligand>
        <name>Mg(2+)</name>
        <dbReference type="ChEBI" id="CHEBI:18420"/>
        <label>1</label>
    </ligand>
</feature>
<feature type="binding site" evidence="1">
    <location>
        <position position="110"/>
    </location>
    <ligand>
        <name>Mg(2+)</name>
        <dbReference type="ChEBI" id="CHEBI:18420"/>
        <label>1</label>
    </ligand>
</feature>
<feature type="binding site" evidence="1">
    <location>
        <position position="110"/>
    </location>
    <ligand>
        <name>Mg(2+)</name>
        <dbReference type="ChEBI" id="CHEBI:18420"/>
        <label>2</label>
    </ligand>
</feature>
<feature type="binding site" evidence="1">
    <location>
        <position position="112"/>
    </location>
    <ligand>
        <name>Mg(2+)</name>
        <dbReference type="ChEBI" id="CHEBI:18420"/>
        <label>1</label>
    </ligand>
</feature>
<feature type="binding site" evidence="1">
    <location>
        <begin position="113"/>
        <end position="116"/>
    </location>
    <ligand>
        <name>substrate</name>
    </ligand>
</feature>
<feature type="binding site" evidence="1">
    <location>
        <position position="113"/>
    </location>
    <ligand>
        <name>Mg(2+)</name>
        <dbReference type="ChEBI" id="CHEBI:18420"/>
        <label>2</label>
    </ligand>
</feature>
<feature type="binding site" evidence="1">
    <location>
        <position position="206"/>
    </location>
    <ligand>
        <name>substrate</name>
    </ligand>
</feature>
<feature type="binding site" evidence="1">
    <location>
        <position position="239"/>
    </location>
    <ligand>
        <name>substrate</name>
    </ligand>
</feature>
<feature type="binding site" evidence="1">
    <location>
        <begin position="257"/>
        <end position="259"/>
    </location>
    <ligand>
        <name>substrate</name>
    </ligand>
</feature>
<feature type="binding site" evidence="1">
    <location>
        <position position="269"/>
    </location>
    <ligand>
        <name>substrate</name>
    </ligand>
</feature>
<feature type="binding site" evidence="1">
    <location>
        <position position="275"/>
    </location>
    <ligand>
        <name>Mg(2+)</name>
        <dbReference type="ChEBI" id="CHEBI:18420"/>
        <label>2</label>
    </ligand>
</feature>
<protein>
    <recommendedName>
        <fullName evidence="1">Fructose-1,6-bisphosphatase class 1</fullName>
        <shortName evidence="1">FBPase class 1</shortName>
        <ecNumber evidence="1">3.1.3.11</ecNumber>
    </recommendedName>
    <alternativeName>
        <fullName evidence="1">D-fructose-1,6-bisphosphate 1-phosphohydrolase class 1</fullName>
    </alternativeName>
</protein>
<name>F16PA_SHIFL</name>
<keyword id="KW-0119">Carbohydrate metabolism</keyword>
<keyword id="KW-0963">Cytoplasm</keyword>
<keyword id="KW-0378">Hydrolase</keyword>
<keyword id="KW-0460">Magnesium</keyword>
<keyword id="KW-0479">Metal-binding</keyword>
<keyword id="KW-1185">Reference proteome</keyword>